<comment type="function">
    <text evidence="1">Provides the cells with the ability to utilize trehalose at high osmolarity by splitting it into glucose molecules that can subsequently be taken up by the phosphotransferase-mediated uptake system.</text>
</comment>
<comment type="catalytic activity">
    <reaction evidence="1">
        <text>alpha,alpha-trehalose + H2O = alpha-D-glucose + beta-D-glucose</text>
        <dbReference type="Rhea" id="RHEA:32675"/>
        <dbReference type="ChEBI" id="CHEBI:15377"/>
        <dbReference type="ChEBI" id="CHEBI:15903"/>
        <dbReference type="ChEBI" id="CHEBI:16551"/>
        <dbReference type="ChEBI" id="CHEBI:17925"/>
        <dbReference type="EC" id="3.2.1.28"/>
    </reaction>
</comment>
<comment type="subunit">
    <text evidence="1">Monomer.</text>
</comment>
<comment type="subcellular location">
    <subcellularLocation>
        <location evidence="1">Periplasm</location>
    </subcellularLocation>
</comment>
<comment type="similarity">
    <text evidence="1">Belongs to the glycosyl hydrolase 37 family.</text>
</comment>
<protein>
    <recommendedName>
        <fullName evidence="1">Periplasmic trehalase</fullName>
        <ecNumber evidence="1">3.2.1.28</ecNumber>
    </recommendedName>
    <alternativeName>
        <fullName evidence="1">Alpha,alpha-trehalase</fullName>
    </alternativeName>
    <alternativeName>
        <fullName evidence="1">Alpha,alpha-trehalose glucohydrolase</fullName>
    </alternativeName>
</protein>
<keyword id="KW-0326">Glycosidase</keyword>
<keyword id="KW-0378">Hydrolase</keyword>
<keyword id="KW-0574">Periplasm</keyword>
<keyword id="KW-0732">Signal</keyword>
<accession>B7LXB1</accession>
<sequence length="565" mass="63695">MKSPAPSRPQKMALIPACIFLCFAALSVQAEETPVTPQPPDILLGPLFNDVQNAKLFPDQKTFADAVPNSDPLMILADYRMQQNQSGFDLRHFVNVNFTLPKEGEKYVPPEGQSLREHIDGLWPVLTRSTENTEKWDSLLPLPEPYVVPGGRFREVYYWDSYFTMLGLAESGHWDKVADMVANFAHEIDTYGHIPNGNRSYYLSRSQPPFFALMVELLAQHEGDAALKQYLPQMQKEYAYWMDGVENLQAGQQEKRVVKLQDGTLLNRYWDDRDTPRPESWVEDIATAKSNPNRPATEIYRDLRSAAASGWDFSSRWMDNQHQLNTLRTTSIVPVDLNSLMFKMEKILARASKAAGDNAMANQYETLANARQKGIEKYMWNDQQGWYADYDLKSHKVRNQLTAAALFPLYVNAAAKDRANKMATATKTHLLQPGGLNTTSVKSGQQWDAPNGWAPLQWVATEGLQNYGQKEVAMDISWHFLTNVQHTYDREKKLVEKYDVSTTGTGGGGGEYPLQDGFGWTNGVTLKMLDLICPKEQPCDNVPATRPTVKSATTQPSTKEAQPTP</sequence>
<name>TREA_ECO8A</name>
<reference key="1">
    <citation type="journal article" date="2009" name="PLoS Genet.">
        <title>Organised genome dynamics in the Escherichia coli species results in highly diverse adaptive paths.</title>
        <authorList>
            <person name="Touchon M."/>
            <person name="Hoede C."/>
            <person name="Tenaillon O."/>
            <person name="Barbe V."/>
            <person name="Baeriswyl S."/>
            <person name="Bidet P."/>
            <person name="Bingen E."/>
            <person name="Bonacorsi S."/>
            <person name="Bouchier C."/>
            <person name="Bouvet O."/>
            <person name="Calteau A."/>
            <person name="Chiapello H."/>
            <person name="Clermont O."/>
            <person name="Cruveiller S."/>
            <person name="Danchin A."/>
            <person name="Diard M."/>
            <person name="Dossat C."/>
            <person name="Karoui M.E."/>
            <person name="Frapy E."/>
            <person name="Garry L."/>
            <person name="Ghigo J.M."/>
            <person name="Gilles A.M."/>
            <person name="Johnson J."/>
            <person name="Le Bouguenec C."/>
            <person name="Lescat M."/>
            <person name="Mangenot S."/>
            <person name="Martinez-Jehanne V."/>
            <person name="Matic I."/>
            <person name="Nassif X."/>
            <person name="Oztas S."/>
            <person name="Petit M.A."/>
            <person name="Pichon C."/>
            <person name="Rouy Z."/>
            <person name="Ruf C.S."/>
            <person name="Schneider D."/>
            <person name="Tourret J."/>
            <person name="Vacherie B."/>
            <person name="Vallenet D."/>
            <person name="Medigue C."/>
            <person name="Rocha E.P.C."/>
            <person name="Denamur E."/>
        </authorList>
    </citation>
    <scope>NUCLEOTIDE SEQUENCE [LARGE SCALE GENOMIC DNA]</scope>
    <source>
        <strain>IAI1</strain>
    </source>
</reference>
<feature type="signal peptide" evidence="1">
    <location>
        <begin position="1"/>
        <end position="30"/>
    </location>
</feature>
<feature type="chain" id="PRO_1000136418" description="Periplasmic trehalase">
    <location>
        <begin position="31"/>
        <end position="565"/>
    </location>
</feature>
<feature type="region of interest" description="Disordered" evidence="2">
    <location>
        <begin position="538"/>
        <end position="565"/>
    </location>
</feature>
<feature type="compositionally biased region" description="Polar residues" evidence="2">
    <location>
        <begin position="548"/>
        <end position="565"/>
    </location>
</feature>
<feature type="active site" description="Proton donor/acceptor" evidence="1">
    <location>
        <position position="312"/>
    </location>
</feature>
<feature type="active site" description="Proton donor/acceptor" evidence="1">
    <location>
        <position position="496"/>
    </location>
</feature>
<feature type="binding site" evidence="1">
    <location>
        <position position="152"/>
    </location>
    <ligand>
        <name>substrate</name>
    </ligand>
</feature>
<feature type="binding site" evidence="1">
    <location>
        <begin position="159"/>
        <end position="160"/>
    </location>
    <ligand>
        <name>substrate</name>
    </ligand>
</feature>
<feature type="binding site" evidence="1">
    <location>
        <position position="196"/>
    </location>
    <ligand>
        <name>substrate</name>
    </ligand>
</feature>
<feature type="binding site" evidence="1">
    <location>
        <begin position="205"/>
        <end position="207"/>
    </location>
    <ligand>
        <name>substrate</name>
    </ligand>
</feature>
<feature type="binding site" evidence="1">
    <location>
        <begin position="277"/>
        <end position="279"/>
    </location>
    <ligand>
        <name>substrate</name>
    </ligand>
</feature>
<feature type="binding site" evidence="1">
    <location>
        <position position="310"/>
    </location>
    <ligand>
        <name>substrate</name>
    </ligand>
</feature>
<feature type="binding site" evidence="1">
    <location>
        <position position="511"/>
    </location>
    <ligand>
        <name>substrate</name>
    </ligand>
</feature>
<organism>
    <name type="scientific">Escherichia coli O8 (strain IAI1)</name>
    <dbReference type="NCBI Taxonomy" id="585034"/>
    <lineage>
        <taxon>Bacteria</taxon>
        <taxon>Pseudomonadati</taxon>
        <taxon>Pseudomonadota</taxon>
        <taxon>Gammaproteobacteria</taxon>
        <taxon>Enterobacterales</taxon>
        <taxon>Enterobacteriaceae</taxon>
        <taxon>Escherichia</taxon>
    </lineage>
</organism>
<gene>
    <name evidence="1" type="primary">treA</name>
    <name type="ordered locus">ECIAI1_1216</name>
</gene>
<proteinExistence type="inferred from homology"/>
<dbReference type="EC" id="3.2.1.28" evidence="1"/>
<dbReference type="EMBL" id="CU928160">
    <property type="protein sequence ID" value="CAQ98076.1"/>
    <property type="molecule type" value="Genomic_DNA"/>
</dbReference>
<dbReference type="RefSeq" id="WP_000841717.1">
    <property type="nucleotide sequence ID" value="NC_011741.1"/>
</dbReference>
<dbReference type="SMR" id="B7LXB1"/>
<dbReference type="CAZy" id="GH37">
    <property type="family name" value="Glycoside Hydrolase Family 37"/>
</dbReference>
<dbReference type="KEGG" id="ecr:ECIAI1_1216"/>
<dbReference type="HOGENOM" id="CLU_006451_3_1_6"/>
<dbReference type="GO" id="GO:0042597">
    <property type="term" value="C:periplasmic space"/>
    <property type="evidence" value="ECO:0007669"/>
    <property type="project" value="UniProtKB-SubCell"/>
</dbReference>
<dbReference type="GO" id="GO:0004555">
    <property type="term" value="F:alpha,alpha-trehalase activity"/>
    <property type="evidence" value="ECO:0007669"/>
    <property type="project" value="UniProtKB-UniRule"/>
</dbReference>
<dbReference type="GO" id="GO:0071474">
    <property type="term" value="P:cellular hyperosmotic response"/>
    <property type="evidence" value="ECO:0007669"/>
    <property type="project" value="InterPro"/>
</dbReference>
<dbReference type="GO" id="GO:0005993">
    <property type="term" value="P:trehalose catabolic process"/>
    <property type="evidence" value="ECO:0007669"/>
    <property type="project" value="InterPro"/>
</dbReference>
<dbReference type="FunFam" id="1.50.10.10:FF:000003">
    <property type="entry name" value="Cytoplasmic trehalase"/>
    <property type="match status" value="1"/>
</dbReference>
<dbReference type="Gene3D" id="1.50.10.10">
    <property type="match status" value="1"/>
</dbReference>
<dbReference type="HAMAP" id="MF_01060">
    <property type="entry name" value="Peripl_trehalase"/>
    <property type="match status" value="1"/>
</dbReference>
<dbReference type="InterPro" id="IPR008928">
    <property type="entry name" value="6-hairpin_glycosidase_sf"/>
</dbReference>
<dbReference type="InterPro" id="IPR012341">
    <property type="entry name" value="6hp_glycosidase-like_sf"/>
</dbReference>
<dbReference type="InterPro" id="IPR001661">
    <property type="entry name" value="Glyco_hydro_37"/>
</dbReference>
<dbReference type="InterPro" id="IPR018232">
    <property type="entry name" value="Glyco_hydro_37_CS"/>
</dbReference>
<dbReference type="InterPro" id="IPR023720">
    <property type="entry name" value="Trehalase_periplasmic"/>
</dbReference>
<dbReference type="NCBIfam" id="NF009773">
    <property type="entry name" value="PRK13270.1"/>
    <property type="match status" value="1"/>
</dbReference>
<dbReference type="NCBIfam" id="NF009774">
    <property type="entry name" value="PRK13271.1"/>
    <property type="match status" value="1"/>
</dbReference>
<dbReference type="PANTHER" id="PTHR23403">
    <property type="entry name" value="TREHALASE"/>
    <property type="match status" value="1"/>
</dbReference>
<dbReference type="PANTHER" id="PTHR23403:SF1">
    <property type="entry name" value="TREHALASE"/>
    <property type="match status" value="1"/>
</dbReference>
<dbReference type="Pfam" id="PF01204">
    <property type="entry name" value="Trehalase"/>
    <property type="match status" value="1"/>
</dbReference>
<dbReference type="PRINTS" id="PR00744">
    <property type="entry name" value="GLHYDRLASE37"/>
</dbReference>
<dbReference type="SUPFAM" id="SSF48208">
    <property type="entry name" value="Six-hairpin glycosidases"/>
    <property type="match status" value="1"/>
</dbReference>
<dbReference type="PROSITE" id="PS00927">
    <property type="entry name" value="TREHALASE_1"/>
    <property type="match status" value="1"/>
</dbReference>
<dbReference type="PROSITE" id="PS00928">
    <property type="entry name" value="TREHALASE_2"/>
    <property type="match status" value="1"/>
</dbReference>
<evidence type="ECO:0000255" key="1">
    <source>
        <dbReference type="HAMAP-Rule" id="MF_01060"/>
    </source>
</evidence>
<evidence type="ECO:0000256" key="2">
    <source>
        <dbReference type="SAM" id="MobiDB-lite"/>
    </source>
</evidence>